<sequence>MNIPTKFTTSKIRSDFLEFFKNKGHKIVPSAPLVPGNDPTLLFTNSGMVQFKDVFLGAEKRSEVRVADVQCCLRAGGKHNDLDSVGYTARHHTFFEMLGNWSFGDYFKKEAITWAWELLTHVWELPPERLLVTVYHTDDESYALWRDMVGVPEDRIVRIGDNKGAPFASDNFWQMADTGPCGPCTEIFYDHGEHIPGGPPGSPDEDGDRFIEIWNLVFMQFDRQSDGTLVPLPAPCVDTGMGLERLAAILQHVHTNYEIDLFQTLILKAAELTAVADVQNKSLRVIADHSRACAFLIVDGVLPSNEGRGYVLRRIIRRALRHGWMLGVRQPFFNNMVPTLVAVMGDAYPKLQAAAESVMRTLLAEEERFAETLDVGMKIFNEVAAKVANGVIPGSDAFRLYDTYGFPVDLTADIARERGMSVDMVGFEAAMTQQRKTARAAGKFGRGVQLSAERAAMLSPTVFLGYEQLQADGLRVVALLSDGGLTDSASVGDEVIVLTDRTPFYAESGGQVGDIGTLMASDGVRLEVTDTQKLMGQFHGHVARIVQGGVKVGDVLSGSVAVARRKMVALNHSATHLLHCALRSVFGTHVVQKGSLVAPDRLRFDFSHFEPIAAAQMTLIERMVNDEVRANHLVMIEQMGMQAALDAGAMALFGEKYGEHVRVVTMGTSVELCGGTHINRTGDIGLFKIISECGVSSGVRRIEAVTGESALNHVLAEEHRLYEVAGLIGSNANDVVNHIRQLTDRQKTLERELEKLKGKLISGTITDLLSTAVNVADVKVVAARLDGLDGKALREALDRLKLQLSDAVIVLAGVTGGKVALVTAVNGRRAMGKVKADTLLSHVATQINGRGGGRVDFAQGGGEDGPSLRSALDGVATWVKQHLN</sequence>
<organism>
    <name type="scientific">Xylella fastidiosa (strain 9a5c)</name>
    <dbReference type="NCBI Taxonomy" id="160492"/>
    <lineage>
        <taxon>Bacteria</taxon>
        <taxon>Pseudomonadati</taxon>
        <taxon>Pseudomonadota</taxon>
        <taxon>Gammaproteobacteria</taxon>
        <taxon>Lysobacterales</taxon>
        <taxon>Lysobacteraceae</taxon>
        <taxon>Xylella</taxon>
    </lineage>
</organism>
<accession>Q9PH22</accession>
<gene>
    <name evidence="1" type="primary">alaS</name>
    <name type="ordered locus">XF_0124</name>
</gene>
<proteinExistence type="inferred from homology"/>
<comment type="function">
    <text evidence="1">Catalyzes the attachment of alanine to tRNA(Ala) in a two-step reaction: alanine is first activated by ATP to form Ala-AMP and then transferred to the acceptor end of tRNA(Ala). Also edits incorrectly charged Ser-tRNA(Ala) and Gly-tRNA(Ala) via its editing domain.</text>
</comment>
<comment type="catalytic activity">
    <reaction evidence="1">
        <text>tRNA(Ala) + L-alanine + ATP = L-alanyl-tRNA(Ala) + AMP + diphosphate</text>
        <dbReference type="Rhea" id="RHEA:12540"/>
        <dbReference type="Rhea" id="RHEA-COMP:9657"/>
        <dbReference type="Rhea" id="RHEA-COMP:9923"/>
        <dbReference type="ChEBI" id="CHEBI:30616"/>
        <dbReference type="ChEBI" id="CHEBI:33019"/>
        <dbReference type="ChEBI" id="CHEBI:57972"/>
        <dbReference type="ChEBI" id="CHEBI:78442"/>
        <dbReference type="ChEBI" id="CHEBI:78497"/>
        <dbReference type="ChEBI" id="CHEBI:456215"/>
        <dbReference type="EC" id="6.1.1.7"/>
    </reaction>
</comment>
<comment type="cofactor">
    <cofactor evidence="1">
        <name>Zn(2+)</name>
        <dbReference type="ChEBI" id="CHEBI:29105"/>
    </cofactor>
    <text evidence="1">Binds 1 zinc ion per subunit.</text>
</comment>
<comment type="subcellular location">
    <subcellularLocation>
        <location evidence="1">Cytoplasm</location>
    </subcellularLocation>
</comment>
<comment type="domain">
    <text evidence="1">Consists of three domains; the N-terminal catalytic domain, the editing domain and the C-terminal C-Ala domain. The editing domain removes incorrectly charged amino acids, while the C-Ala domain, along with tRNA(Ala), serves as a bridge to cooperatively bring together the editing and aminoacylation centers thus stimulating deacylation of misacylated tRNAs.</text>
</comment>
<comment type="similarity">
    <text evidence="1">Belongs to the class-II aminoacyl-tRNA synthetase family.</text>
</comment>
<comment type="sequence caution" evidence="2">
    <conflict type="erroneous initiation">
        <sequence resource="EMBL-CDS" id="AAF82937"/>
    </conflict>
</comment>
<name>SYA_XYLFA</name>
<feature type="chain" id="PRO_0000075254" description="Alanine--tRNA ligase">
    <location>
        <begin position="1"/>
        <end position="884"/>
    </location>
</feature>
<feature type="binding site" evidence="1">
    <location>
        <position position="572"/>
    </location>
    <ligand>
        <name>Zn(2+)</name>
        <dbReference type="ChEBI" id="CHEBI:29105"/>
    </ligand>
</feature>
<feature type="binding site" evidence="1">
    <location>
        <position position="576"/>
    </location>
    <ligand>
        <name>Zn(2+)</name>
        <dbReference type="ChEBI" id="CHEBI:29105"/>
    </ligand>
</feature>
<feature type="binding site" evidence="1">
    <location>
        <position position="673"/>
    </location>
    <ligand>
        <name>Zn(2+)</name>
        <dbReference type="ChEBI" id="CHEBI:29105"/>
    </ligand>
</feature>
<feature type="binding site" evidence="1">
    <location>
        <position position="677"/>
    </location>
    <ligand>
        <name>Zn(2+)</name>
        <dbReference type="ChEBI" id="CHEBI:29105"/>
    </ligand>
</feature>
<evidence type="ECO:0000255" key="1">
    <source>
        <dbReference type="HAMAP-Rule" id="MF_00036"/>
    </source>
</evidence>
<evidence type="ECO:0000305" key="2"/>
<protein>
    <recommendedName>
        <fullName evidence="1">Alanine--tRNA ligase</fullName>
        <ecNumber evidence="1">6.1.1.7</ecNumber>
    </recommendedName>
    <alternativeName>
        <fullName evidence="1">Alanyl-tRNA synthetase</fullName>
        <shortName evidence="1">AlaRS</shortName>
    </alternativeName>
</protein>
<dbReference type="EC" id="6.1.1.7" evidence="1"/>
<dbReference type="EMBL" id="AE003849">
    <property type="protein sequence ID" value="AAF82937.1"/>
    <property type="status" value="ALT_INIT"/>
    <property type="molecule type" value="Genomic_DNA"/>
</dbReference>
<dbReference type="PIR" id="C82844">
    <property type="entry name" value="C82844"/>
</dbReference>
<dbReference type="RefSeq" id="WP_042462594.1">
    <property type="nucleotide sequence ID" value="NC_002488.3"/>
</dbReference>
<dbReference type="SMR" id="Q9PH22"/>
<dbReference type="STRING" id="160492.XF_0124"/>
<dbReference type="KEGG" id="xfa:XF_0124"/>
<dbReference type="PATRIC" id="fig|160492.11.peg.130"/>
<dbReference type="eggNOG" id="COG0013">
    <property type="taxonomic scope" value="Bacteria"/>
</dbReference>
<dbReference type="HOGENOM" id="CLU_004485_1_1_6"/>
<dbReference type="Proteomes" id="UP000000812">
    <property type="component" value="Chromosome"/>
</dbReference>
<dbReference type="GO" id="GO:0005829">
    <property type="term" value="C:cytosol"/>
    <property type="evidence" value="ECO:0007669"/>
    <property type="project" value="TreeGrafter"/>
</dbReference>
<dbReference type="GO" id="GO:0004813">
    <property type="term" value="F:alanine-tRNA ligase activity"/>
    <property type="evidence" value="ECO:0007669"/>
    <property type="project" value="UniProtKB-UniRule"/>
</dbReference>
<dbReference type="GO" id="GO:0002161">
    <property type="term" value="F:aminoacyl-tRNA deacylase activity"/>
    <property type="evidence" value="ECO:0007669"/>
    <property type="project" value="TreeGrafter"/>
</dbReference>
<dbReference type="GO" id="GO:0005524">
    <property type="term" value="F:ATP binding"/>
    <property type="evidence" value="ECO:0007669"/>
    <property type="project" value="UniProtKB-UniRule"/>
</dbReference>
<dbReference type="GO" id="GO:0000049">
    <property type="term" value="F:tRNA binding"/>
    <property type="evidence" value="ECO:0007669"/>
    <property type="project" value="UniProtKB-KW"/>
</dbReference>
<dbReference type="GO" id="GO:0008270">
    <property type="term" value="F:zinc ion binding"/>
    <property type="evidence" value="ECO:0007669"/>
    <property type="project" value="UniProtKB-UniRule"/>
</dbReference>
<dbReference type="GO" id="GO:0006419">
    <property type="term" value="P:alanyl-tRNA aminoacylation"/>
    <property type="evidence" value="ECO:0007669"/>
    <property type="project" value="UniProtKB-UniRule"/>
</dbReference>
<dbReference type="GO" id="GO:0045892">
    <property type="term" value="P:negative regulation of DNA-templated transcription"/>
    <property type="evidence" value="ECO:0007669"/>
    <property type="project" value="TreeGrafter"/>
</dbReference>
<dbReference type="CDD" id="cd00673">
    <property type="entry name" value="AlaRS_core"/>
    <property type="match status" value="1"/>
</dbReference>
<dbReference type="FunFam" id="3.10.310.40:FF:000001">
    <property type="entry name" value="Alanine--tRNA ligase"/>
    <property type="match status" value="1"/>
</dbReference>
<dbReference type="FunFam" id="3.30.54.20:FF:000001">
    <property type="entry name" value="Alanine--tRNA ligase"/>
    <property type="match status" value="1"/>
</dbReference>
<dbReference type="FunFam" id="3.30.930.10:FF:000004">
    <property type="entry name" value="Alanine--tRNA ligase"/>
    <property type="match status" value="1"/>
</dbReference>
<dbReference type="FunFam" id="3.30.980.10:FF:000004">
    <property type="entry name" value="Alanine--tRNA ligase, cytoplasmic"/>
    <property type="match status" value="1"/>
</dbReference>
<dbReference type="Gene3D" id="2.40.30.130">
    <property type="match status" value="1"/>
</dbReference>
<dbReference type="Gene3D" id="3.10.310.40">
    <property type="match status" value="1"/>
</dbReference>
<dbReference type="Gene3D" id="3.30.54.20">
    <property type="match status" value="1"/>
</dbReference>
<dbReference type="Gene3D" id="6.10.250.550">
    <property type="match status" value="1"/>
</dbReference>
<dbReference type="Gene3D" id="3.30.930.10">
    <property type="entry name" value="Bira Bifunctional Protein, Domain 2"/>
    <property type="match status" value="1"/>
</dbReference>
<dbReference type="Gene3D" id="3.30.980.10">
    <property type="entry name" value="Threonyl-trna Synthetase, Chain A, domain 2"/>
    <property type="match status" value="1"/>
</dbReference>
<dbReference type="HAMAP" id="MF_00036_B">
    <property type="entry name" value="Ala_tRNA_synth_B"/>
    <property type="match status" value="1"/>
</dbReference>
<dbReference type="InterPro" id="IPR045864">
    <property type="entry name" value="aa-tRNA-synth_II/BPL/LPL"/>
</dbReference>
<dbReference type="InterPro" id="IPR002318">
    <property type="entry name" value="Ala-tRNA-lgiase_IIc"/>
</dbReference>
<dbReference type="InterPro" id="IPR018162">
    <property type="entry name" value="Ala-tRNA-ligase_IIc_anticod-bd"/>
</dbReference>
<dbReference type="InterPro" id="IPR018165">
    <property type="entry name" value="Ala-tRNA-synth_IIc_core"/>
</dbReference>
<dbReference type="InterPro" id="IPR018164">
    <property type="entry name" value="Ala-tRNA-synth_IIc_N"/>
</dbReference>
<dbReference type="InterPro" id="IPR050058">
    <property type="entry name" value="Ala-tRNA_ligase"/>
</dbReference>
<dbReference type="InterPro" id="IPR023033">
    <property type="entry name" value="Ala_tRNA_ligase_euk/bac"/>
</dbReference>
<dbReference type="InterPro" id="IPR003156">
    <property type="entry name" value="DHHA1_dom"/>
</dbReference>
<dbReference type="InterPro" id="IPR018163">
    <property type="entry name" value="Thr/Ala-tRNA-synth_IIc_edit"/>
</dbReference>
<dbReference type="InterPro" id="IPR009000">
    <property type="entry name" value="Transl_B-barrel_sf"/>
</dbReference>
<dbReference type="InterPro" id="IPR012947">
    <property type="entry name" value="tRNA_SAD"/>
</dbReference>
<dbReference type="NCBIfam" id="TIGR00344">
    <property type="entry name" value="alaS"/>
    <property type="match status" value="1"/>
</dbReference>
<dbReference type="PANTHER" id="PTHR11777:SF9">
    <property type="entry name" value="ALANINE--TRNA LIGASE, CYTOPLASMIC"/>
    <property type="match status" value="1"/>
</dbReference>
<dbReference type="PANTHER" id="PTHR11777">
    <property type="entry name" value="ALANYL-TRNA SYNTHETASE"/>
    <property type="match status" value="1"/>
</dbReference>
<dbReference type="Pfam" id="PF02272">
    <property type="entry name" value="DHHA1"/>
    <property type="match status" value="1"/>
</dbReference>
<dbReference type="Pfam" id="PF01411">
    <property type="entry name" value="tRNA-synt_2c"/>
    <property type="match status" value="1"/>
</dbReference>
<dbReference type="Pfam" id="PF07973">
    <property type="entry name" value="tRNA_SAD"/>
    <property type="match status" value="1"/>
</dbReference>
<dbReference type="PRINTS" id="PR00980">
    <property type="entry name" value="TRNASYNTHALA"/>
</dbReference>
<dbReference type="SMART" id="SM00863">
    <property type="entry name" value="tRNA_SAD"/>
    <property type="match status" value="1"/>
</dbReference>
<dbReference type="SUPFAM" id="SSF55681">
    <property type="entry name" value="Class II aaRS and biotin synthetases"/>
    <property type="match status" value="1"/>
</dbReference>
<dbReference type="SUPFAM" id="SSF101353">
    <property type="entry name" value="Putative anticodon-binding domain of alanyl-tRNA synthetase (AlaRS)"/>
    <property type="match status" value="1"/>
</dbReference>
<dbReference type="SUPFAM" id="SSF55186">
    <property type="entry name" value="ThrRS/AlaRS common domain"/>
    <property type="match status" value="1"/>
</dbReference>
<dbReference type="SUPFAM" id="SSF50447">
    <property type="entry name" value="Translation proteins"/>
    <property type="match status" value="1"/>
</dbReference>
<dbReference type="PROSITE" id="PS50860">
    <property type="entry name" value="AA_TRNA_LIGASE_II_ALA"/>
    <property type="match status" value="1"/>
</dbReference>
<keyword id="KW-0030">Aminoacyl-tRNA synthetase</keyword>
<keyword id="KW-0067">ATP-binding</keyword>
<keyword id="KW-0963">Cytoplasm</keyword>
<keyword id="KW-0436">Ligase</keyword>
<keyword id="KW-0479">Metal-binding</keyword>
<keyword id="KW-0547">Nucleotide-binding</keyword>
<keyword id="KW-0648">Protein biosynthesis</keyword>
<keyword id="KW-0694">RNA-binding</keyword>
<keyword id="KW-0820">tRNA-binding</keyword>
<keyword id="KW-0862">Zinc</keyword>
<reference key="1">
    <citation type="journal article" date="2000" name="Nature">
        <title>The genome sequence of the plant pathogen Xylella fastidiosa.</title>
        <authorList>
            <person name="Simpson A.J.G."/>
            <person name="Reinach F.C."/>
            <person name="Arruda P."/>
            <person name="Abreu F.A."/>
            <person name="Acencio M."/>
            <person name="Alvarenga R."/>
            <person name="Alves L.M.C."/>
            <person name="Araya J.E."/>
            <person name="Baia G.S."/>
            <person name="Baptista C.S."/>
            <person name="Barros M.H."/>
            <person name="Bonaccorsi E.D."/>
            <person name="Bordin S."/>
            <person name="Bove J.M."/>
            <person name="Briones M.R.S."/>
            <person name="Bueno M.R.P."/>
            <person name="Camargo A.A."/>
            <person name="Camargo L.E.A."/>
            <person name="Carraro D.M."/>
            <person name="Carrer H."/>
            <person name="Colauto N.B."/>
            <person name="Colombo C."/>
            <person name="Costa F.F."/>
            <person name="Costa M.C.R."/>
            <person name="Costa-Neto C.M."/>
            <person name="Coutinho L.L."/>
            <person name="Cristofani M."/>
            <person name="Dias-Neto E."/>
            <person name="Docena C."/>
            <person name="El-Dorry H."/>
            <person name="Facincani A.P."/>
            <person name="Ferreira A.J.S."/>
            <person name="Ferreira V.C.A."/>
            <person name="Ferro J.A."/>
            <person name="Fraga J.S."/>
            <person name="Franca S.C."/>
            <person name="Franco M.C."/>
            <person name="Frohme M."/>
            <person name="Furlan L.R."/>
            <person name="Garnier M."/>
            <person name="Goldman G.H."/>
            <person name="Goldman M.H.S."/>
            <person name="Gomes S.L."/>
            <person name="Gruber A."/>
            <person name="Ho P.L."/>
            <person name="Hoheisel J.D."/>
            <person name="Junqueira M.L."/>
            <person name="Kemper E.L."/>
            <person name="Kitajima J.P."/>
            <person name="Krieger J.E."/>
            <person name="Kuramae E.E."/>
            <person name="Laigret F."/>
            <person name="Lambais M.R."/>
            <person name="Leite L.C.C."/>
            <person name="Lemos E.G.M."/>
            <person name="Lemos M.V.F."/>
            <person name="Lopes S.A."/>
            <person name="Lopes C.R."/>
            <person name="Machado J.A."/>
            <person name="Machado M.A."/>
            <person name="Madeira A.M.B.N."/>
            <person name="Madeira H.M.F."/>
            <person name="Marino C.L."/>
            <person name="Marques M.V."/>
            <person name="Martins E.A.L."/>
            <person name="Martins E.M.F."/>
            <person name="Matsukuma A.Y."/>
            <person name="Menck C.F.M."/>
            <person name="Miracca E.C."/>
            <person name="Miyaki C.Y."/>
            <person name="Monteiro-Vitorello C.B."/>
            <person name="Moon D.H."/>
            <person name="Nagai M.A."/>
            <person name="Nascimento A.L.T.O."/>
            <person name="Netto L.E.S."/>
            <person name="Nhani A. Jr."/>
            <person name="Nobrega F.G."/>
            <person name="Nunes L.R."/>
            <person name="Oliveira M.A."/>
            <person name="de Oliveira M.C."/>
            <person name="de Oliveira R.C."/>
            <person name="Palmieri D.A."/>
            <person name="Paris A."/>
            <person name="Peixoto B.R."/>
            <person name="Pereira G.A.G."/>
            <person name="Pereira H.A. Jr."/>
            <person name="Pesquero J.B."/>
            <person name="Quaggio R.B."/>
            <person name="Roberto P.G."/>
            <person name="Rodrigues V."/>
            <person name="de Rosa A.J.M."/>
            <person name="de Rosa V.E. Jr."/>
            <person name="de Sa R.G."/>
            <person name="Santelli R.V."/>
            <person name="Sawasaki H.E."/>
            <person name="da Silva A.C.R."/>
            <person name="da Silva A.M."/>
            <person name="da Silva F.R."/>
            <person name="Silva W.A. Jr."/>
            <person name="da Silveira J.F."/>
            <person name="Silvestri M.L.Z."/>
            <person name="Siqueira W.J."/>
            <person name="de Souza A.A."/>
            <person name="de Souza A.P."/>
            <person name="Terenzi M.F."/>
            <person name="Truffi D."/>
            <person name="Tsai S.M."/>
            <person name="Tsuhako M.H."/>
            <person name="Vallada H."/>
            <person name="Van Sluys M.A."/>
            <person name="Verjovski-Almeida S."/>
            <person name="Vettore A.L."/>
            <person name="Zago M.A."/>
            <person name="Zatz M."/>
            <person name="Meidanis J."/>
            <person name="Setubal J.C."/>
        </authorList>
    </citation>
    <scope>NUCLEOTIDE SEQUENCE [LARGE SCALE GENOMIC DNA]</scope>
    <source>
        <strain>9a5c</strain>
    </source>
</reference>